<feature type="chain" id="PRO_0000290349" description="Zinc finger protein 248">
    <location>
        <begin position="1"/>
        <end position="578"/>
    </location>
</feature>
<feature type="domain" description="KRAB" evidence="3">
    <location>
        <begin position="8"/>
        <end position="78"/>
    </location>
</feature>
<feature type="zinc finger region" description="C2H2-type 1; degenerate" evidence="2">
    <location>
        <begin position="239"/>
        <end position="263"/>
    </location>
</feature>
<feature type="zinc finger region" description="C2H2-type 2" evidence="2">
    <location>
        <begin position="379"/>
        <end position="401"/>
    </location>
</feature>
<feature type="zinc finger region" description="C2H2-type 3" evidence="2">
    <location>
        <begin position="407"/>
        <end position="429"/>
    </location>
</feature>
<feature type="zinc finger region" description="C2H2-type 4" evidence="2">
    <location>
        <begin position="435"/>
        <end position="457"/>
    </location>
</feature>
<feature type="zinc finger region" description="C2H2-type 5" evidence="2">
    <location>
        <begin position="463"/>
        <end position="485"/>
    </location>
</feature>
<feature type="zinc finger region" description="C2H2-type 6" evidence="2">
    <location>
        <begin position="491"/>
        <end position="513"/>
    </location>
</feature>
<feature type="zinc finger region" description="C2H2-type 7" evidence="2">
    <location>
        <begin position="519"/>
        <end position="542"/>
    </location>
</feature>
<feature type="zinc finger region" description="C2H2-type 8" evidence="2">
    <location>
        <begin position="547"/>
        <end position="569"/>
    </location>
</feature>
<feature type="cross-link" description="Glycyl lysine isopeptide (Lys-Gly) (interchain with G-Cter in SUMO2)" evidence="1">
    <location>
        <position position="340"/>
    </location>
</feature>
<gene>
    <name type="primary">ZNF248</name>
</gene>
<evidence type="ECO:0000250" key="1">
    <source>
        <dbReference type="UniProtKB" id="Q8NDW4"/>
    </source>
</evidence>
<evidence type="ECO:0000255" key="2">
    <source>
        <dbReference type="PROSITE-ProRule" id="PRU00042"/>
    </source>
</evidence>
<evidence type="ECO:0000255" key="3">
    <source>
        <dbReference type="PROSITE-ProRule" id="PRU00119"/>
    </source>
</evidence>
<evidence type="ECO:0000305" key="4"/>
<name>ZN248_PONAB</name>
<sequence length="578" mass="66986">MNKSQEQVSFKDVCVDFTQEEWYLLDPAQKILYRDVILENYSNLVSVGYCITKPEVIFKIEQGEEPWILEKGFPSQDPERKWKVDDMLESSQENEDDHFWELLFHNNKTVSVENGDRGSKTFNLGTDPVSLRNYPYKICDSCEMSLKNISGLIISKKSCSRKKPDEFNVCEKLLLDIRHEKIPIGEKSYKYDQKRNAINYHQDLSQPSFGQSFEYSKNGQGFHDEAAFFTNKRSQIGETVCKYNECGRTFIESLKLNISQRPHLEMEPYGCSICGKSFCMNLRFGHQRALTKDNPYEYNEYGEIFCDNSAFIIHQGAYTRKILREYKVSDKTWEKSTVLKHQIVHMGGKSYDYNENGSNFSKKSHLTQLRRAHTGEKTFECGECGKTFWEKSNLTQHQRTHTGEKPYECTECGKAFCQKPHLTNHQRTHTGEKPYECKQCGKTFCVKSNLTEHQRTHTGEKPYECNACGKSFCHRSALTVHQRTHTGEKPFICNECGKSFCVKSNLIVHQRTHTGEKPYKCNECGKTFCEKSALTKHQRTHTGEKPYECNACGKTFSQRSVLTKHQRIHMRVKALSTS</sequence>
<comment type="function">
    <text>May be involved in transcriptional regulation.</text>
</comment>
<comment type="subcellular location">
    <subcellularLocation>
        <location evidence="4">Nucleus</location>
    </subcellularLocation>
</comment>
<comment type="similarity">
    <text evidence="4">Belongs to the krueppel C2H2-type zinc-finger protein family.</text>
</comment>
<organism>
    <name type="scientific">Pongo abelii</name>
    <name type="common">Sumatran orangutan</name>
    <name type="synonym">Pongo pygmaeus abelii</name>
    <dbReference type="NCBI Taxonomy" id="9601"/>
    <lineage>
        <taxon>Eukaryota</taxon>
        <taxon>Metazoa</taxon>
        <taxon>Chordata</taxon>
        <taxon>Craniata</taxon>
        <taxon>Vertebrata</taxon>
        <taxon>Euteleostomi</taxon>
        <taxon>Mammalia</taxon>
        <taxon>Eutheria</taxon>
        <taxon>Euarchontoglires</taxon>
        <taxon>Primates</taxon>
        <taxon>Haplorrhini</taxon>
        <taxon>Catarrhini</taxon>
        <taxon>Hominidae</taxon>
        <taxon>Pongo</taxon>
    </lineage>
</organism>
<proteinExistence type="evidence at transcript level"/>
<keyword id="KW-0238">DNA-binding</keyword>
<keyword id="KW-1017">Isopeptide bond</keyword>
<keyword id="KW-0479">Metal-binding</keyword>
<keyword id="KW-0539">Nucleus</keyword>
<keyword id="KW-1185">Reference proteome</keyword>
<keyword id="KW-0677">Repeat</keyword>
<keyword id="KW-0804">Transcription</keyword>
<keyword id="KW-0805">Transcription regulation</keyword>
<keyword id="KW-0832">Ubl conjugation</keyword>
<keyword id="KW-0862">Zinc</keyword>
<keyword id="KW-0863">Zinc-finger</keyword>
<reference key="1">
    <citation type="submission" date="2004-11" db="EMBL/GenBank/DDBJ databases">
        <authorList>
            <consortium name="The German cDNA consortium"/>
        </authorList>
    </citation>
    <scope>NUCLEOTIDE SEQUENCE [LARGE SCALE MRNA]</scope>
    <source>
        <tissue>Kidney</tissue>
    </source>
</reference>
<protein>
    <recommendedName>
        <fullName>Zinc finger protein 248</fullName>
    </recommendedName>
</protein>
<dbReference type="EMBL" id="CR857488">
    <property type="protein sequence ID" value="CAH89773.1"/>
    <property type="molecule type" value="mRNA"/>
</dbReference>
<dbReference type="RefSeq" id="NP_001124811.1">
    <property type="nucleotide sequence ID" value="NM_001131339.1"/>
</dbReference>
<dbReference type="SMR" id="Q5REN4"/>
<dbReference type="STRING" id="9601.ENSPPYP00000002572"/>
<dbReference type="GeneID" id="100436044"/>
<dbReference type="KEGG" id="pon:100436044"/>
<dbReference type="CTD" id="57209"/>
<dbReference type="eggNOG" id="KOG1721">
    <property type="taxonomic scope" value="Eukaryota"/>
</dbReference>
<dbReference type="InParanoid" id="Q5REN4"/>
<dbReference type="OrthoDB" id="9819978at2759"/>
<dbReference type="Proteomes" id="UP000001595">
    <property type="component" value="Unplaced"/>
</dbReference>
<dbReference type="GO" id="GO:0005634">
    <property type="term" value="C:nucleus"/>
    <property type="evidence" value="ECO:0007669"/>
    <property type="project" value="UniProtKB-SubCell"/>
</dbReference>
<dbReference type="GO" id="GO:0000981">
    <property type="term" value="F:DNA-binding transcription factor activity, RNA polymerase II-specific"/>
    <property type="evidence" value="ECO:0007669"/>
    <property type="project" value="TreeGrafter"/>
</dbReference>
<dbReference type="GO" id="GO:0000978">
    <property type="term" value="F:RNA polymerase II cis-regulatory region sequence-specific DNA binding"/>
    <property type="evidence" value="ECO:0007669"/>
    <property type="project" value="TreeGrafter"/>
</dbReference>
<dbReference type="GO" id="GO:0008270">
    <property type="term" value="F:zinc ion binding"/>
    <property type="evidence" value="ECO:0007669"/>
    <property type="project" value="UniProtKB-KW"/>
</dbReference>
<dbReference type="CDD" id="cd07765">
    <property type="entry name" value="KRAB_A-box"/>
    <property type="match status" value="1"/>
</dbReference>
<dbReference type="FunFam" id="3.30.160.60:FF:000557">
    <property type="entry name" value="zinc finger and SCAN domain-containing protein 29"/>
    <property type="match status" value="1"/>
</dbReference>
<dbReference type="FunFam" id="3.30.160.60:FF:000555">
    <property type="entry name" value="Zinc finger protein 1 homolog"/>
    <property type="match status" value="1"/>
</dbReference>
<dbReference type="FunFam" id="3.30.160.60:FF:002343">
    <property type="entry name" value="Zinc finger protein 33A"/>
    <property type="match status" value="1"/>
</dbReference>
<dbReference type="FunFam" id="3.30.160.60:FF:000060">
    <property type="entry name" value="zinc finger protein 436"/>
    <property type="match status" value="1"/>
</dbReference>
<dbReference type="FunFam" id="3.30.160.60:FF:002090">
    <property type="entry name" value="Zinc finger protein 473"/>
    <property type="match status" value="1"/>
</dbReference>
<dbReference type="FunFam" id="3.30.160.60:FF:002254">
    <property type="entry name" value="Zinc finger protein 540"/>
    <property type="match status" value="1"/>
</dbReference>
<dbReference type="FunFam" id="3.30.160.60:FF:001157">
    <property type="entry name" value="Zinc finger protein 793"/>
    <property type="match status" value="1"/>
</dbReference>
<dbReference type="Gene3D" id="6.10.140.140">
    <property type="match status" value="1"/>
</dbReference>
<dbReference type="Gene3D" id="3.30.160.60">
    <property type="entry name" value="Classic Zinc Finger"/>
    <property type="match status" value="9"/>
</dbReference>
<dbReference type="InterPro" id="IPR050752">
    <property type="entry name" value="C2H2-ZF_domain"/>
</dbReference>
<dbReference type="InterPro" id="IPR001909">
    <property type="entry name" value="KRAB"/>
</dbReference>
<dbReference type="InterPro" id="IPR036051">
    <property type="entry name" value="KRAB_dom_sf"/>
</dbReference>
<dbReference type="InterPro" id="IPR036236">
    <property type="entry name" value="Znf_C2H2_sf"/>
</dbReference>
<dbReference type="InterPro" id="IPR013087">
    <property type="entry name" value="Znf_C2H2_type"/>
</dbReference>
<dbReference type="PANTHER" id="PTHR24384:SF245">
    <property type="entry name" value="C2H2-TYPE DOMAIN-CONTAINING PROTEIN"/>
    <property type="match status" value="1"/>
</dbReference>
<dbReference type="PANTHER" id="PTHR24384">
    <property type="entry name" value="FINGER PUTATIVE TRANSCRIPTION FACTOR FAMILY-RELATED"/>
    <property type="match status" value="1"/>
</dbReference>
<dbReference type="Pfam" id="PF01352">
    <property type="entry name" value="KRAB"/>
    <property type="match status" value="1"/>
</dbReference>
<dbReference type="Pfam" id="PF00096">
    <property type="entry name" value="zf-C2H2"/>
    <property type="match status" value="7"/>
</dbReference>
<dbReference type="SMART" id="SM00349">
    <property type="entry name" value="KRAB"/>
    <property type="match status" value="1"/>
</dbReference>
<dbReference type="SMART" id="SM00355">
    <property type="entry name" value="ZnF_C2H2"/>
    <property type="match status" value="7"/>
</dbReference>
<dbReference type="SUPFAM" id="SSF57667">
    <property type="entry name" value="beta-beta-alpha zinc fingers"/>
    <property type="match status" value="7"/>
</dbReference>
<dbReference type="SUPFAM" id="SSF109640">
    <property type="entry name" value="KRAB domain (Kruppel-associated box)"/>
    <property type="match status" value="1"/>
</dbReference>
<dbReference type="PROSITE" id="PS50805">
    <property type="entry name" value="KRAB"/>
    <property type="match status" value="1"/>
</dbReference>
<dbReference type="PROSITE" id="PS00028">
    <property type="entry name" value="ZINC_FINGER_C2H2_1"/>
    <property type="match status" value="7"/>
</dbReference>
<dbReference type="PROSITE" id="PS50157">
    <property type="entry name" value="ZINC_FINGER_C2H2_2"/>
    <property type="match status" value="8"/>
</dbReference>
<accession>Q5REN4</accession>